<feature type="transit peptide" description="Mitochondrion" evidence="5">
    <location>
        <begin position="1"/>
        <end position="84"/>
    </location>
</feature>
<feature type="chain" id="PRO_0000108416" description="Cytochrome c1, heme protein, mitochondrial">
    <location>
        <begin position="85"/>
        <end position="325"/>
    </location>
</feature>
<feature type="topological domain" description="Mitochondrial intermembrane" evidence="6">
    <location>
        <begin position="85"/>
        <end position="281"/>
    </location>
</feature>
<feature type="transmembrane region" description="Helical" evidence="6">
    <location>
        <begin position="282"/>
        <end position="315"/>
    </location>
</feature>
<feature type="topological domain" description="Mitochondrial matrix" evidence="6">
    <location>
        <begin position="316"/>
        <end position="325"/>
    </location>
</feature>
<feature type="domain" description="Cytochrome c" evidence="3">
    <location>
        <begin position="108"/>
        <end position="209"/>
    </location>
</feature>
<feature type="binding site" description="covalent" evidence="6 8 9">
    <location>
        <position position="121"/>
    </location>
    <ligand>
        <name>heme c</name>
        <dbReference type="ChEBI" id="CHEBI:61717"/>
    </ligand>
</feature>
<feature type="binding site" description="covalent" evidence="6 8 9">
    <location>
        <position position="124"/>
    </location>
    <ligand>
        <name>heme c</name>
        <dbReference type="ChEBI" id="CHEBI:61717"/>
    </ligand>
</feature>
<feature type="binding site" description="axial binding residue" evidence="6 8 9">
    <location>
        <position position="125"/>
    </location>
    <ligand>
        <name>heme c</name>
        <dbReference type="ChEBI" id="CHEBI:61717"/>
    </ligand>
    <ligandPart>
        <name>Fe</name>
        <dbReference type="ChEBI" id="CHEBI:18248"/>
    </ligandPart>
</feature>
<feature type="binding site" description="axial binding residue" evidence="6 8">
    <location>
        <position position="244"/>
    </location>
    <ligand>
        <name>heme c</name>
        <dbReference type="ChEBI" id="CHEBI:61717"/>
    </ligand>
    <ligandPart>
        <name>Fe</name>
        <dbReference type="ChEBI" id="CHEBI:18248"/>
    </ligandPart>
</feature>
<feature type="strand" evidence="10">
    <location>
        <begin position="100"/>
        <end position="102"/>
    </location>
</feature>
<feature type="helix" evidence="12">
    <location>
        <begin position="107"/>
        <end position="119"/>
    </location>
</feature>
<feature type="helix" evidence="12">
    <location>
        <begin position="121"/>
        <end position="123"/>
    </location>
</feature>
<feature type="strand" evidence="11">
    <location>
        <begin position="127"/>
        <end position="131"/>
    </location>
</feature>
<feature type="helix" evidence="12">
    <location>
        <begin position="132"/>
        <end position="135"/>
    </location>
</feature>
<feature type="turn" evidence="12">
    <location>
        <begin position="136"/>
        <end position="138"/>
    </location>
</feature>
<feature type="helix" evidence="12">
    <location>
        <begin position="142"/>
        <end position="150"/>
    </location>
</feature>
<feature type="strand" evidence="12">
    <location>
        <begin position="152"/>
        <end position="156"/>
    </location>
</feature>
<feature type="turn" evidence="10">
    <location>
        <begin position="160"/>
        <end position="162"/>
    </location>
</feature>
<feature type="strand" evidence="12">
    <location>
        <begin position="165"/>
        <end position="168"/>
    </location>
</feature>
<feature type="strand" evidence="15">
    <location>
        <begin position="171"/>
        <end position="174"/>
    </location>
</feature>
<feature type="strand" evidence="12">
    <location>
        <begin position="178"/>
        <end position="181"/>
    </location>
</feature>
<feature type="helix" evidence="12">
    <location>
        <begin position="182"/>
        <end position="188"/>
    </location>
</feature>
<feature type="turn" evidence="12">
    <location>
        <begin position="189"/>
        <end position="191"/>
    </location>
</feature>
<feature type="strand" evidence="15">
    <location>
        <begin position="197"/>
        <end position="199"/>
    </location>
</feature>
<feature type="turn" evidence="12">
    <location>
        <begin position="200"/>
        <end position="202"/>
    </location>
</feature>
<feature type="strand" evidence="14">
    <location>
        <begin position="203"/>
        <end position="206"/>
    </location>
</feature>
<feature type="helix" evidence="12">
    <location>
        <begin position="207"/>
        <end position="215"/>
    </location>
</feature>
<feature type="strand" evidence="15">
    <location>
        <begin position="229"/>
        <end position="233"/>
    </location>
</feature>
<feature type="strand" evidence="15">
    <location>
        <begin position="235"/>
        <end position="237"/>
    </location>
</feature>
<feature type="strand" evidence="12">
    <location>
        <begin position="240"/>
        <end position="244"/>
    </location>
</feature>
<feature type="strand" evidence="15">
    <location>
        <begin position="248"/>
        <end position="250"/>
    </location>
</feature>
<feature type="turn" evidence="13">
    <location>
        <begin position="256"/>
        <end position="258"/>
    </location>
</feature>
<feature type="helix" evidence="12">
    <location>
        <begin position="263"/>
        <end position="278"/>
    </location>
</feature>
<feature type="helix" evidence="12">
    <location>
        <begin position="282"/>
        <end position="315"/>
    </location>
</feature>
<feature type="strand" evidence="12">
    <location>
        <begin position="318"/>
        <end position="321"/>
    </location>
</feature>
<dbReference type="EC" id="7.1.1.8"/>
<dbReference type="EMBL" id="BC109917">
    <property type="protein sequence ID" value="AAI09918.1"/>
    <property type="molecule type" value="mRNA"/>
</dbReference>
<dbReference type="EMBL" id="U97172">
    <property type="protein sequence ID" value="AAB57834.1"/>
    <property type="molecule type" value="Genomic_DNA"/>
</dbReference>
<dbReference type="PIR" id="A00118">
    <property type="entry name" value="CCBO1"/>
</dbReference>
<dbReference type="RefSeq" id="NP_001033179.1">
    <property type="nucleotide sequence ID" value="NM_001038090.2"/>
</dbReference>
<dbReference type="PDB" id="1BCC">
    <property type="method" value="X-ray"/>
    <property type="resolution" value="3.16 A"/>
    <property type="chains" value="D=85-325"/>
</dbReference>
<dbReference type="PDB" id="1BE3">
    <property type="method" value="X-ray"/>
    <property type="resolution" value="3.00 A"/>
    <property type="chains" value="D=85-325"/>
</dbReference>
<dbReference type="PDB" id="1BGY">
    <property type="method" value="X-ray"/>
    <property type="resolution" value="3.00 A"/>
    <property type="chains" value="D/P=85-325"/>
</dbReference>
<dbReference type="PDB" id="1L0L">
    <property type="method" value="X-ray"/>
    <property type="resolution" value="2.35 A"/>
    <property type="chains" value="D=85-325"/>
</dbReference>
<dbReference type="PDB" id="1L0N">
    <property type="method" value="X-ray"/>
    <property type="resolution" value="2.60 A"/>
    <property type="chains" value="D=85-325"/>
</dbReference>
<dbReference type="PDB" id="1NTK">
    <property type="method" value="X-ray"/>
    <property type="resolution" value="2.60 A"/>
    <property type="chains" value="D=85-325"/>
</dbReference>
<dbReference type="PDB" id="1NTM">
    <property type="method" value="X-ray"/>
    <property type="resolution" value="2.40 A"/>
    <property type="chains" value="D=85-325"/>
</dbReference>
<dbReference type="PDB" id="1NTZ">
    <property type="method" value="X-ray"/>
    <property type="resolution" value="2.60 A"/>
    <property type="chains" value="D=85-325"/>
</dbReference>
<dbReference type="PDB" id="1NU1">
    <property type="method" value="X-ray"/>
    <property type="resolution" value="3.20 A"/>
    <property type="chains" value="D=85-325"/>
</dbReference>
<dbReference type="PDB" id="1PP9">
    <property type="method" value="X-ray"/>
    <property type="resolution" value="2.10 A"/>
    <property type="chains" value="D/Q=85-325"/>
</dbReference>
<dbReference type="PDB" id="1PPJ">
    <property type="method" value="X-ray"/>
    <property type="resolution" value="2.10 A"/>
    <property type="chains" value="D/Q=85-325"/>
</dbReference>
<dbReference type="PDB" id="1QCR">
    <property type="method" value="X-ray"/>
    <property type="resolution" value="2.70 A"/>
    <property type="chains" value="D=251-325"/>
</dbReference>
<dbReference type="PDB" id="1SQB">
    <property type="method" value="X-ray"/>
    <property type="resolution" value="2.69 A"/>
    <property type="chains" value="D=85-325"/>
</dbReference>
<dbReference type="PDB" id="1SQP">
    <property type="method" value="X-ray"/>
    <property type="resolution" value="2.70 A"/>
    <property type="chains" value="D=85-325"/>
</dbReference>
<dbReference type="PDB" id="1SQQ">
    <property type="method" value="X-ray"/>
    <property type="resolution" value="3.00 A"/>
    <property type="chains" value="D=85-325"/>
</dbReference>
<dbReference type="PDB" id="1SQV">
    <property type="method" value="X-ray"/>
    <property type="resolution" value="2.85 A"/>
    <property type="chains" value="D=85-325"/>
</dbReference>
<dbReference type="PDB" id="1SQX">
    <property type="method" value="X-ray"/>
    <property type="resolution" value="2.60 A"/>
    <property type="chains" value="D=85-325"/>
</dbReference>
<dbReference type="PDB" id="2A06">
    <property type="method" value="X-ray"/>
    <property type="resolution" value="2.10 A"/>
    <property type="chains" value="D/Q=85-325"/>
</dbReference>
<dbReference type="PDB" id="2BCC">
    <property type="method" value="X-ray"/>
    <property type="resolution" value="3.50 A"/>
    <property type="chains" value="D=85-325"/>
</dbReference>
<dbReference type="PDB" id="2FYU">
    <property type="method" value="X-ray"/>
    <property type="resolution" value="2.26 A"/>
    <property type="chains" value="D=85-325"/>
</dbReference>
<dbReference type="PDB" id="2YBB">
    <property type="method" value="EM"/>
    <property type="resolution" value="19.00 A"/>
    <property type="chains" value="D/d=85-325"/>
</dbReference>
<dbReference type="PDB" id="3BCC">
    <property type="method" value="X-ray"/>
    <property type="resolution" value="3.70 A"/>
    <property type="chains" value="D=85-325"/>
</dbReference>
<dbReference type="PDB" id="4D6T">
    <property type="method" value="X-ray"/>
    <property type="resolution" value="3.57 A"/>
    <property type="chains" value="D/Q=61-325"/>
</dbReference>
<dbReference type="PDB" id="4D6U">
    <property type="method" value="X-ray"/>
    <property type="resolution" value="4.09 A"/>
    <property type="chains" value="D/Q=1-325"/>
</dbReference>
<dbReference type="PDB" id="5GPN">
    <property type="method" value="EM"/>
    <property type="resolution" value="5.40 A"/>
    <property type="chains" value="D/P=85-325"/>
</dbReference>
<dbReference type="PDB" id="5KLV">
    <property type="method" value="X-ray"/>
    <property type="resolution" value="2.65 A"/>
    <property type="chains" value="D=85-325"/>
</dbReference>
<dbReference type="PDB" id="5LUF">
    <property type="method" value="EM"/>
    <property type="resolution" value="9.10 A"/>
    <property type="chains" value="d/p=85-325"/>
</dbReference>
<dbReference type="PDB" id="5NMI">
    <property type="method" value="X-ray"/>
    <property type="resolution" value="3.50 A"/>
    <property type="chains" value="D/Q=86-325"/>
</dbReference>
<dbReference type="PDB" id="5OKD">
    <property type="method" value="X-ray"/>
    <property type="resolution" value="3.10 A"/>
    <property type="chains" value="D=1-325"/>
</dbReference>
<dbReference type="PDB" id="6FO0">
    <property type="method" value="EM"/>
    <property type="resolution" value="4.10 A"/>
    <property type="chains" value="D/Q=1-325"/>
</dbReference>
<dbReference type="PDB" id="6FO2">
    <property type="method" value="EM"/>
    <property type="resolution" value="4.40 A"/>
    <property type="chains" value="D/Q=1-325"/>
</dbReference>
<dbReference type="PDB" id="6FO6">
    <property type="method" value="EM"/>
    <property type="resolution" value="4.10 A"/>
    <property type="chains" value="D/Q=1-325"/>
</dbReference>
<dbReference type="PDB" id="6HAW">
    <property type="method" value="X-ray"/>
    <property type="resolution" value="3.45 A"/>
    <property type="chains" value="D=86-324"/>
</dbReference>
<dbReference type="PDB" id="6NHG">
    <property type="method" value="X-ray"/>
    <property type="resolution" value="2.80 A"/>
    <property type="chains" value="D=85-325"/>
</dbReference>
<dbReference type="PDB" id="6XVF">
    <property type="method" value="X-ray"/>
    <property type="resolution" value="3.50 A"/>
    <property type="chains" value="D=86-324"/>
</dbReference>
<dbReference type="PDB" id="6ZFS">
    <property type="method" value="X-ray"/>
    <property type="resolution" value="3.50 A"/>
    <property type="chains" value="D=86-324"/>
</dbReference>
<dbReference type="PDB" id="6ZFT">
    <property type="method" value="X-ray"/>
    <property type="resolution" value="3.30 A"/>
    <property type="chains" value="D=86-324"/>
</dbReference>
<dbReference type="PDB" id="6ZFU">
    <property type="method" value="X-ray"/>
    <property type="resolution" value="3.50 A"/>
    <property type="chains" value="D=86-324"/>
</dbReference>
<dbReference type="PDB" id="7DGQ">
    <property type="method" value="EM"/>
    <property type="resolution" value="5.00 A"/>
    <property type="chains" value="o/z=1-325"/>
</dbReference>
<dbReference type="PDB" id="7DGR">
    <property type="method" value="EM"/>
    <property type="resolution" value="4.60 A"/>
    <property type="chains" value="o/z=85-325"/>
</dbReference>
<dbReference type="PDB" id="7DGS">
    <property type="method" value="EM"/>
    <property type="resolution" value="7.80 A"/>
    <property type="chains" value="o/z=1-325"/>
</dbReference>
<dbReference type="PDB" id="7DKF">
    <property type="method" value="EM"/>
    <property type="resolution" value="8.30 A"/>
    <property type="chains" value="D1/P1=1-325"/>
</dbReference>
<dbReference type="PDB" id="7R3V">
    <property type="method" value="X-ray"/>
    <property type="resolution" value="3.20 A"/>
    <property type="chains" value="D=86-324"/>
</dbReference>
<dbReference type="PDB" id="7TAY">
    <property type="method" value="X-ray"/>
    <property type="resolution" value="2.95 A"/>
    <property type="chains" value="D=85-325"/>
</dbReference>
<dbReference type="PDB" id="7TZ6">
    <property type="method" value="EM"/>
    <property type="resolution" value="2.88 A"/>
    <property type="chains" value="D/Q=85-325"/>
</dbReference>
<dbReference type="PDB" id="8P65">
    <property type="method" value="EM"/>
    <property type="resolution" value="3.00 A"/>
    <property type="chains" value="D/Q=85-325"/>
</dbReference>
<dbReference type="PDB" id="9GCX">
    <property type="method" value="X-ray"/>
    <property type="resolution" value="3.52 A"/>
    <property type="chains" value="D=1-325"/>
</dbReference>
<dbReference type="PDBsum" id="1BCC"/>
<dbReference type="PDBsum" id="1BE3"/>
<dbReference type="PDBsum" id="1BGY"/>
<dbReference type="PDBsum" id="1L0L"/>
<dbReference type="PDBsum" id="1L0N"/>
<dbReference type="PDBsum" id="1NTK"/>
<dbReference type="PDBsum" id="1NTM"/>
<dbReference type="PDBsum" id="1NTZ"/>
<dbReference type="PDBsum" id="1NU1"/>
<dbReference type="PDBsum" id="1PP9"/>
<dbReference type="PDBsum" id="1PPJ"/>
<dbReference type="PDBsum" id="1QCR"/>
<dbReference type="PDBsum" id="1SQB"/>
<dbReference type="PDBsum" id="1SQP"/>
<dbReference type="PDBsum" id="1SQQ"/>
<dbReference type="PDBsum" id="1SQV"/>
<dbReference type="PDBsum" id="1SQX"/>
<dbReference type="PDBsum" id="2A06"/>
<dbReference type="PDBsum" id="2BCC"/>
<dbReference type="PDBsum" id="2FYU"/>
<dbReference type="PDBsum" id="2YBB"/>
<dbReference type="PDBsum" id="3BCC"/>
<dbReference type="PDBsum" id="4D6T"/>
<dbReference type="PDBsum" id="4D6U"/>
<dbReference type="PDBsum" id="5GPN"/>
<dbReference type="PDBsum" id="5KLV"/>
<dbReference type="PDBsum" id="5LUF"/>
<dbReference type="PDBsum" id="5NMI"/>
<dbReference type="PDBsum" id="5OKD"/>
<dbReference type="PDBsum" id="6FO0"/>
<dbReference type="PDBsum" id="6FO2"/>
<dbReference type="PDBsum" id="6FO6"/>
<dbReference type="PDBsum" id="6HAW"/>
<dbReference type="PDBsum" id="6NHG"/>
<dbReference type="PDBsum" id="6XVF"/>
<dbReference type="PDBsum" id="6ZFS"/>
<dbReference type="PDBsum" id="6ZFT"/>
<dbReference type="PDBsum" id="6ZFU"/>
<dbReference type="PDBsum" id="7DGQ"/>
<dbReference type="PDBsum" id="7DGR"/>
<dbReference type="PDBsum" id="7DGS"/>
<dbReference type="PDBsum" id="7DKF"/>
<dbReference type="PDBsum" id="7R3V"/>
<dbReference type="PDBsum" id="7TAY"/>
<dbReference type="PDBsum" id="7TZ6"/>
<dbReference type="PDBsum" id="8P65"/>
<dbReference type="PDBsum" id="9GCX"/>
<dbReference type="EMDB" id="EMD-17461"/>
<dbReference type="EMDB" id="EMD-1876"/>
<dbReference type="EMDB" id="EMD-26203"/>
<dbReference type="EMDB" id="EMD-30673"/>
<dbReference type="EMDB" id="EMD-30674"/>
<dbReference type="EMDB" id="EMD-30675"/>
<dbReference type="EMDB" id="EMD-30706"/>
<dbReference type="EMDB" id="EMD-4107"/>
<dbReference type="EMDB" id="EMD-4286"/>
<dbReference type="EMDB" id="EMD-4288"/>
<dbReference type="EMDB" id="EMD-4292"/>
<dbReference type="EMDB" id="EMD-9534"/>
<dbReference type="SMR" id="P00125"/>
<dbReference type="CORUM" id="P00125"/>
<dbReference type="DIP" id="DIP-38976N"/>
<dbReference type="FunCoup" id="P00125">
    <property type="interactions" value="2729"/>
</dbReference>
<dbReference type="IntAct" id="P00125">
    <property type="interactions" value="10"/>
</dbReference>
<dbReference type="STRING" id="9913.ENSBTAP00000016224"/>
<dbReference type="TCDB" id="3.D.3.2.1">
    <property type="family name" value="the proton-translocating quinol:cytochrome c reductase (qcr) superfamily"/>
</dbReference>
<dbReference type="GlyGen" id="P00125">
    <property type="glycosylation" value="1 site, 1 O-linked glycan (1 site)"/>
</dbReference>
<dbReference type="PaxDb" id="9913-ENSBTAP00000016224"/>
<dbReference type="PeptideAtlas" id="P00125"/>
<dbReference type="Ensembl" id="ENSBTAT00000016224.6">
    <property type="protein sequence ID" value="ENSBTAP00000016224.5"/>
    <property type="gene ID" value="ENSBTAG00000012232.6"/>
</dbReference>
<dbReference type="GeneID" id="512500"/>
<dbReference type="KEGG" id="bta:512500"/>
<dbReference type="CTD" id="1537"/>
<dbReference type="VEuPathDB" id="HostDB:ENSBTAG00000012232"/>
<dbReference type="VGNC" id="VGNC:50266">
    <property type="gene designation" value="CYC1"/>
</dbReference>
<dbReference type="eggNOG" id="KOG3052">
    <property type="taxonomic scope" value="Eukaryota"/>
</dbReference>
<dbReference type="GeneTree" id="ENSGT00390000012445"/>
<dbReference type="HOGENOM" id="CLU_040334_1_0_1"/>
<dbReference type="InParanoid" id="P00125"/>
<dbReference type="OMA" id="WVKKFKW"/>
<dbReference type="OrthoDB" id="5925at2759"/>
<dbReference type="TreeFam" id="TF314799"/>
<dbReference type="Reactome" id="R-BTA-611105">
    <property type="pathway name" value="Respiratory electron transport"/>
</dbReference>
<dbReference type="Reactome" id="R-BTA-9865881">
    <property type="pathway name" value="Complex III assembly"/>
</dbReference>
<dbReference type="EvolutionaryTrace" id="P00125"/>
<dbReference type="Proteomes" id="UP000009136">
    <property type="component" value="Chromosome 14"/>
</dbReference>
<dbReference type="Bgee" id="ENSBTAG00000012232">
    <property type="expression patterns" value="Expressed in cardiac ventricle and 106 other cell types or tissues"/>
</dbReference>
<dbReference type="GO" id="GO:0005743">
    <property type="term" value="C:mitochondrial inner membrane"/>
    <property type="evidence" value="ECO:0000250"/>
    <property type="project" value="AgBase"/>
</dbReference>
<dbReference type="GO" id="GO:0005739">
    <property type="term" value="C:mitochondrion"/>
    <property type="evidence" value="ECO:0000250"/>
    <property type="project" value="AgBase"/>
</dbReference>
<dbReference type="GO" id="GO:0045275">
    <property type="term" value="C:respiratory chain complex III"/>
    <property type="evidence" value="ECO:0000318"/>
    <property type="project" value="GO_Central"/>
</dbReference>
<dbReference type="GO" id="GO:0020037">
    <property type="term" value="F:heme binding"/>
    <property type="evidence" value="ECO:0007669"/>
    <property type="project" value="InterPro"/>
</dbReference>
<dbReference type="GO" id="GO:0046872">
    <property type="term" value="F:metal ion binding"/>
    <property type="evidence" value="ECO:0007669"/>
    <property type="project" value="UniProtKB-KW"/>
</dbReference>
<dbReference type="GO" id="GO:0008121">
    <property type="term" value="F:ubiquinol-cytochrome-c reductase activity"/>
    <property type="evidence" value="ECO:0007669"/>
    <property type="project" value="UniProtKB-EC"/>
</dbReference>
<dbReference type="GO" id="GO:0006122">
    <property type="term" value="P:mitochondrial electron transport, ubiquinol to cytochrome c"/>
    <property type="evidence" value="ECO:0000318"/>
    <property type="project" value="GO_Central"/>
</dbReference>
<dbReference type="FunFam" id="1.10.760.10:FF:000002">
    <property type="entry name" value="Cytochrome c1, heme protein"/>
    <property type="match status" value="1"/>
</dbReference>
<dbReference type="FunFam" id="1.20.5.100:FF:000003">
    <property type="entry name" value="Cytochrome c1, heme protein, mitochondrial"/>
    <property type="match status" value="1"/>
</dbReference>
<dbReference type="Gene3D" id="1.10.760.10">
    <property type="entry name" value="Cytochrome c-like domain"/>
    <property type="match status" value="1"/>
</dbReference>
<dbReference type="Gene3D" id="1.20.5.100">
    <property type="entry name" value="Cytochrome c1, transmembrane anchor, C-terminal"/>
    <property type="match status" value="1"/>
</dbReference>
<dbReference type="InterPro" id="IPR009056">
    <property type="entry name" value="Cyt_c-like_dom"/>
</dbReference>
<dbReference type="InterPro" id="IPR036909">
    <property type="entry name" value="Cyt_c-like_dom_sf"/>
</dbReference>
<dbReference type="InterPro" id="IPR002326">
    <property type="entry name" value="Cyt_c1"/>
</dbReference>
<dbReference type="InterPro" id="IPR021157">
    <property type="entry name" value="Cyt_c1_TM_anchor_C"/>
</dbReference>
<dbReference type="PANTHER" id="PTHR10266">
    <property type="entry name" value="CYTOCHROME C1"/>
    <property type="match status" value="1"/>
</dbReference>
<dbReference type="PANTHER" id="PTHR10266:SF3">
    <property type="entry name" value="CYTOCHROME C1, HEME PROTEIN, MITOCHONDRIAL"/>
    <property type="match status" value="1"/>
</dbReference>
<dbReference type="Pfam" id="PF02167">
    <property type="entry name" value="Cytochrom_C1"/>
    <property type="match status" value="1"/>
</dbReference>
<dbReference type="PRINTS" id="PR00603">
    <property type="entry name" value="CYTOCHROMEC1"/>
</dbReference>
<dbReference type="SUPFAM" id="SSF46626">
    <property type="entry name" value="Cytochrome c"/>
    <property type="match status" value="1"/>
</dbReference>
<dbReference type="SUPFAM" id="SSF81496">
    <property type="entry name" value="Cytochrome c1 subunit of cytochrome bc1 complex (Ubiquinol-cytochrome c reductase), transmembrane anchor"/>
    <property type="match status" value="1"/>
</dbReference>
<dbReference type="PROSITE" id="PS51007">
    <property type="entry name" value="CYTC"/>
    <property type="match status" value="1"/>
</dbReference>
<reference key="1">
    <citation type="submission" date="2005-11" db="EMBL/GenBank/DDBJ databases">
        <authorList>
            <consortium name="NIH - Mammalian Gene Collection (MGC) project"/>
        </authorList>
    </citation>
    <scope>NUCLEOTIDE SEQUENCE [LARGE SCALE MRNA]</scope>
    <source>
        <strain>Crossbred X Angus</strain>
        <tissue>Liver</tissue>
    </source>
</reference>
<reference key="2">
    <citation type="journal article" date="1982" name="J. Biol. Chem.">
        <title>Structural studies of bovine heart cytochrome c1.</title>
        <authorList>
            <person name="Wakabayashi S."/>
            <person name="Matsubara H."/>
            <person name="Kim C.H."/>
            <person name="King T.E."/>
        </authorList>
    </citation>
    <scope>PROTEIN SEQUENCE OF 85-325</scope>
    <source>
        <tissue>Heart</tissue>
    </source>
</reference>
<reference key="3">
    <citation type="submission" date="1997-05" db="EMBL/GenBank/DDBJ databases">
        <title>Partial genomic sequence of the bovine cytochrome c1 gene.</title>
        <authorList>
            <person name="Band M."/>
            <person name="Ron M."/>
        </authorList>
    </citation>
    <scope>NUCLEOTIDE SEQUENCE [GENOMIC DNA] OF 120-194</scope>
    <source>
        <strain>Holstein-Friesian</strain>
    </source>
</reference>
<reference key="4">
    <citation type="journal article" date="1997" name="Science">
        <title>Crystal structure of the cytochrome bc1 complex from bovine heart mitochondria.</title>
        <authorList>
            <person name="Xia D."/>
            <person name="Yu C.A."/>
            <person name="Kim H."/>
            <person name="Xia J.Z."/>
            <person name="Kachurin A.M."/>
            <person name="Zhang L."/>
            <person name="Yu L."/>
            <person name="Deisenhofer J."/>
        </authorList>
    </citation>
    <scope>X-RAY CRYSTALLOGRAPHY (2.7 ANGSTROMS) OF 85-321</scope>
</reference>
<reference key="5">
    <citation type="journal article" date="1998" name="Science">
        <title>Complete structure of the 11-subunit bovine mitochondrial cytochrome bc1 complex.</title>
        <authorList>
            <person name="Iwata S."/>
            <person name="Lee J.W."/>
            <person name="Okada K."/>
            <person name="Lee J.K."/>
            <person name="Iwata M."/>
            <person name="Rasmussen B."/>
            <person name="Link T.A."/>
            <person name="Ramaswamy S."/>
            <person name="Jap B.K."/>
        </authorList>
    </citation>
    <scope>X-RAY CRYSTALLOGRAPHY (3.0 ANGSTROMS) OF 85-321 IN COMPLEX WITH HEME</scope>
    <scope>COFACTOR</scope>
    <scope>HEME-BINDING</scope>
</reference>
<reference key="6">
    <citation type="journal article" date="2002" name="Biochemistry">
        <title>The crystal structure of mitochondrial cytochrome bc1 in complex with famoxadone: the role of aromatic-aromatic interaction in inhibition.</title>
        <authorList>
            <person name="Gao X."/>
            <person name="Wen X."/>
            <person name="Yu C."/>
            <person name="Esser L."/>
            <person name="Tsao S."/>
            <person name="Quinn B."/>
            <person name="Zhang L."/>
            <person name="Yu L."/>
            <person name="Xia D."/>
        </authorList>
    </citation>
    <scope>X-RAY CRYSTALLOGRAPHY (2.35 ANGSTROMS)</scope>
</reference>
<reference key="7">
    <citation type="journal article" date="2004" name="J. Mol. Biol.">
        <title>Crystallographic studies of quinol oxidation site inhibitors: a modified classification of inhibitors for the cytochrome bc(1) complex.</title>
        <authorList>
            <person name="Esser L."/>
            <person name="Quinn B."/>
            <person name="Li Y.F."/>
            <person name="Zhang M."/>
            <person name="Elberry M."/>
            <person name="Yu L."/>
            <person name="Yu C.A."/>
            <person name="Xia D."/>
        </authorList>
    </citation>
    <scope>X-RAY CRYSTALLOGRAPHY (2.69 ANGSTROMS)</scope>
</reference>
<reference key="8">
    <citation type="journal article" date="2005" name="J. Mol. Biol.">
        <title>Binding of the respiratory chain inhibitor antimycin to the mitochondrial bc1 complex: a new crystal structure reveals an altered intramolecular hydrogen-bonding pattern.</title>
        <authorList>
            <person name="Huang L.S."/>
            <person name="Cobessi D."/>
            <person name="Tung E.Y."/>
            <person name="Berry E.A."/>
        </authorList>
    </citation>
    <scope>X-RAY CRYSTALLOGRAPHY (2.1 ANGSTROMS)</scope>
</reference>
<reference key="9">
    <citation type="journal article" date="2006" name="Proc. Natl. Acad. Sci. U.S.A.">
        <title>Surface-modulated motion switch: capture and release of iron-sulfur protein in the cytochrome bc1 complex.</title>
        <authorList>
            <person name="Esser L."/>
            <person name="Gong X."/>
            <person name="Yang S."/>
            <person name="Yu L."/>
            <person name="Yu C.A."/>
            <person name="Xia D."/>
        </authorList>
    </citation>
    <scope>X-RAY CRYSTALLOGRAPHY (2.26 ANGSTROMS)</scope>
</reference>
<reference key="10">
    <citation type="journal article" date="2016" name="Elife">
        <title>Functional asymmetry and electron flow in the bovine respirasome.</title>
        <authorList>
            <person name="Sousa J.S."/>
            <person name="Mills D.J."/>
            <person name="Vonck J."/>
            <person name="Kuehlbrandt W."/>
        </authorList>
    </citation>
    <scope>STRUCTURE BY ELECTRON MICROSCOPY (9.10 ANGSTROMS)</scope>
    <scope>SUBUNIT</scope>
</reference>
<comment type="function">
    <text evidence="1">Component of the ubiquinol-cytochrome c oxidoreductase, a multisubunit transmembrane complex that is part of the mitochondrial electron transport chain which drives oxidative phosphorylation. The respiratory chain contains 3 multisubunit complexes succinate dehydrogenase (complex II, CII), ubiquinol-cytochrome c oxidoreductase (cytochrome b-c1 complex, complex III, CIII) and cytochrome c oxidase (complex IV, CIV), that cooperate to transfer electrons derived from NADH and succinate to molecular oxygen, creating an electrochemical gradient over the inner membrane that drives transmembrane transport and the ATP synthase. The cytochrome b-c1 complex catalyzes electron transfer from ubiquinol to cytochrome c, linking this redox reaction to translocation of protons across the mitochondrial inner membrane, with protons being carried across the membrane as hydrogens on the quinol. In the process called Q cycle, 2 protons are consumed from the matrix, 4 protons are released into the intermembrane space and 2 electrons are passed to cytochrome c. Cytochrome c1 is a catalytic core subunit containing a c-type heme. It transfers electrons from the [2Fe-2S] iron-sulfur cluster of the Rieske protein to cytochrome c.</text>
</comment>
<comment type="catalytic activity">
    <reaction evidence="1">
        <text>a quinol + 2 Fe(III)-[cytochrome c](out) = a quinone + 2 Fe(II)-[cytochrome c](out) + 2 H(+)(out)</text>
        <dbReference type="Rhea" id="RHEA:11484"/>
        <dbReference type="Rhea" id="RHEA-COMP:10350"/>
        <dbReference type="Rhea" id="RHEA-COMP:14399"/>
        <dbReference type="ChEBI" id="CHEBI:15378"/>
        <dbReference type="ChEBI" id="CHEBI:24646"/>
        <dbReference type="ChEBI" id="CHEBI:29033"/>
        <dbReference type="ChEBI" id="CHEBI:29034"/>
        <dbReference type="ChEBI" id="CHEBI:132124"/>
        <dbReference type="EC" id="7.1.1.8"/>
    </reaction>
</comment>
<comment type="cofactor">
    <cofactor evidence="6">
        <name>heme c</name>
        <dbReference type="ChEBI" id="CHEBI:61717"/>
    </cofactor>
    <text evidence="6">Binds 1 heme c group covalently per subunit.</text>
</comment>
<comment type="subunit">
    <text evidence="2 4 6">Component of the ubiquinol-cytochrome c oxidoreductase (cytochrome b-c1 complex, complex III, CIII), a multisubunit enzyme composed of 11 subunits. The complex is composed of 3 respiratory subunits cytochrome b, cytochrome c1 and Rieske protein UQCRFS1, 2 core protein subunits UQCRC1/QCR1 and UQCRC2/QCR2, and 6 low-molecular weight protein subunits UQCRH/QCR6, UQCRB/QCR7, UQCRQ/QCR8, UQCR10/QCR9, UQCR11/QCR10 and subunit 9, the cleavage product of Rieske protein UQCRFS1 (PubMed:9651245). The complex exists as an obligatory dimer and forms supercomplexes (SCs) in the inner mitochondrial membrane with NADH-ubiquinone oxidoreductase (complex I, CI) and cytochrome c oxidase (complex IV, CIV), resulting in different assemblies (supercomplex SCI(1)III(2)IV(1) and megacomplex MCI(2)III(2)IV(2)) (PubMed:27830641). Interacts with FLVCR2; this interaction occurs in the absence of heme and is disrupted upon heme binding.</text>
</comment>
<comment type="subcellular location">
    <subcellularLocation>
        <location evidence="1">Mitochondrion inner membrane</location>
        <topology evidence="1">Single-pass membrane protein</topology>
    </subcellularLocation>
</comment>
<comment type="similarity">
    <text evidence="7">Belongs to the cytochrome c family.</text>
</comment>
<organism>
    <name type="scientific">Bos taurus</name>
    <name type="common">Bovine</name>
    <dbReference type="NCBI Taxonomy" id="9913"/>
    <lineage>
        <taxon>Eukaryota</taxon>
        <taxon>Metazoa</taxon>
        <taxon>Chordata</taxon>
        <taxon>Craniata</taxon>
        <taxon>Vertebrata</taxon>
        <taxon>Euteleostomi</taxon>
        <taxon>Mammalia</taxon>
        <taxon>Eutheria</taxon>
        <taxon>Laurasiatheria</taxon>
        <taxon>Artiodactyla</taxon>
        <taxon>Ruminantia</taxon>
        <taxon>Pecora</taxon>
        <taxon>Bovidae</taxon>
        <taxon>Bovinae</taxon>
        <taxon>Bos</taxon>
    </lineage>
</organism>
<proteinExistence type="evidence at protein level"/>
<evidence type="ECO:0000250" key="1">
    <source>
        <dbReference type="UniProtKB" id="P07143"/>
    </source>
</evidence>
<evidence type="ECO:0000250" key="2">
    <source>
        <dbReference type="UniProtKB" id="Q9D0M3"/>
    </source>
</evidence>
<evidence type="ECO:0000255" key="3">
    <source>
        <dbReference type="PROSITE-ProRule" id="PRU00433"/>
    </source>
</evidence>
<evidence type="ECO:0000269" key="4">
    <source>
    </source>
</evidence>
<evidence type="ECO:0000269" key="5">
    <source>
    </source>
</evidence>
<evidence type="ECO:0000269" key="6">
    <source>
    </source>
</evidence>
<evidence type="ECO:0000305" key="7"/>
<evidence type="ECO:0007744" key="8">
    <source>
        <dbReference type="PDB" id="1BE3"/>
    </source>
</evidence>
<evidence type="ECO:0007744" key="9">
    <source>
        <dbReference type="PDB" id="1BGY"/>
    </source>
</evidence>
<evidence type="ECO:0007829" key="10">
    <source>
        <dbReference type="PDB" id="1L0L"/>
    </source>
</evidence>
<evidence type="ECO:0007829" key="11">
    <source>
        <dbReference type="PDB" id="1NTK"/>
    </source>
</evidence>
<evidence type="ECO:0007829" key="12">
    <source>
        <dbReference type="PDB" id="1PP9"/>
    </source>
</evidence>
<evidence type="ECO:0007829" key="13">
    <source>
        <dbReference type="PDB" id="1SQP"/>
    </source>
</evidence>
<evidence type="ECO:0007829" key="14">
    <source>
        <dbReference type="PDB" id="1SQQ"/>
    </source>
</evidence>
<evidence type="ECO:0007829" key="15">
    <source>
        <dbReference type="PDB" id="2FYU"/>
    </source>
</evidence>
<accession>P00125</accession>
<accession>Q2TBM2</accession>
<keyword id="KW-0002">3D-structure</keyword>
<keyword id="KW-0903">Direct protein sequencing</keyword>
<keyword id="KW-0249">Electron transport</keyword>
<keyword id="KW-0349">Heme</keyword>
<keyword id="KW-0408">Iron</keyword>
<keyword id="KW-0472">Membrane</keyword>
<keyword id="KW-0479">Metal-binding</keyword>
<keyword id="KW-0496">Mitochondrion</keyword>
<keyword id="KW-0999">Mitochondrion inner membrane</keyword>
<keyword id="KW-1185">Reference proteome</keyword>
<keyword id="KW-0679">Respiratory chain</keyword>
<keyword id="KW-0809">Transit peptide</keyword>
<keyword id="KW-1278">Translocase</keyword>
<keyword id="KW-0812">Transmembrane</keyword>
<keyword id="KW-1133">Transmembrane helix</keyword>
<keyword id="KW-0813">Transport</keyword>
<sequence>MAAAAATLRGAMVGPRGAGLPGARARGLLCGARPGQLPLRTPQAVSLSSKSGLSRGRKVILSALGMLAAGGAGLAVALHSAVSASDLELHPPSYPWSHRGLLSSLDHTSIRRGFQVYKQVCSSCHSMDYVAYRHLVGVCYTEDEAKALAEEVEVQDGPNEDGEMFMRPGKLSDYFPKPYPNPEAARAANNGALPPDLSYIVRARHGGEDYVFSLLTGYCEPPTGVSLREGLYFNPYFPGQAIGMAPPIYNEVLEFDDGTPATMSQVAKDVCTFLRWAAEPEHDHRKRMGLKMLLMMGLLLPLVYAMKRHKWSVLKSRKLAYRPPK</sequence>
<gene>
    <name type="primary">CYC1</name>
</gene>
<protein>
    <recommendedName>
        <fullName>Cytochrome c1, heme protein, mitochondrial</fullName>
        <ecNumber>7.1.1.8</ecNumber>
    </recommendedName>
    <alternativeName>
        <fullName>Complex III subunit 4</fullName>
    </alternativeName>
    <alternativeName>
        <fullName>Complex III subunit IV</fullName>
    </alternativeName>
    <alternativeName>
        <fullName>Cytochrome b-c1 complex subunit 4</fullName>
    </alternativeName>
    <alternativeName>
        <fullName>Ubiquinol-cytochrome-c reductase complex cytochrome c1 subunit</fullName>
        <shortName>Cytochrome c-1</shortName>
    </alternativeName>
</protein>
<name>CY1_BOVIN</name>